<reference key="1">
    <citation type="journal article" date="2005" name="Science">
        <title>The transcriptional landscape of the mammalian genome.</title>
        <authorList>
            <person name="Carninci P."/>
            <person name="Kasukawa T."/>
            <person name="Katayama S."/>
            <person name="Gough J."/>
            <person name="Frith M.C."/>
            <person name="Maeda N."/>
            <person name="Oyama R."/>
            <person name="Ravasi T."/>
            <person name="Lenhard B."/>
            <person name="Wells C."/>
            <person name="Kodzius R."/>
            <person name="Shimokawa K."/>
            <person name="Bajic V.B."/>
            <person name="Brenner S.E."/>
            <person name="Batalov S."/>
            <person name="Forrest A.R."/>
            <person name="Zavolan M."/>
            <person name="Davis M.J."/>
            <person name="Wilming L.G."/>
            <person name="Aidinis V."/>
            <person name="Allen J.E."/>
            <person name="Ambesi-Impiombato A."/>
            <person name="Apweiler R."/>
            <person name="Aturaliya R.N."/>
            <person name="Bailey T.L."/>
            <person name="Bansal M."/>
            <person name="Baxter L."/>
            <person name="Beisel K.W."/>
            <person name="Bersano T."/>
            <person name="Bono H."/>
            <person name="Chalk A.M."/>
            <person name="Chiu K.P."/>
            <person name="Choudhary V."/>
            <person name="Christoffels A."/>
            <person name="Clutterbuck D.R."/>
            <person name="Crowe M.L."/>
            <person name="Dalla E."/>
            <person name="Dalrymple B.P."/>
            <person name="de Bono B."/>
            <person name="Della Gatta G."/>
            <person name="di Bernardo D."/>
            <person name="Down T."/>
            <person name="Engstrom P."/>
            <person name="Fagiolini M."/>
            <person name="Faulkner G."/>
            <person name="Fletcher C.F."/>
            <person name="Fukushima T."/>
            <person name="Furuno M."/>
            <person name="Futaki S."/>
            <person name="Gariboldi M."/>
            <person name="Georgii-Hemming P."/>
            <person name="Gingeras T.R."/>
            <person name="Gojobori T."/>
            <person name="Green R.E."/>
            <person name="Gustincich S."/>
            <person name="Harbers M."/>
            <person name="Hayashi Y."/>
            <person name="Hensch T.K."/>
            <person name="Hirokawa N."/>
            <person name="Hill D."/>
            <person name="Huminiecki L."/>
            <person name="Iacono M."/>
            <person name="Ikeo K."/>
            <person name="Iwama A."/>
            <person name="Ishikawa T."/>
            <person name="Jakt M."/>
            <person name="Kanapin A."/>
            <person name="Katoh M."/>
            <person name="Kawasawa Y."/>
            <person name="Kelso J."/>
            <person name="Kitamura H."/>
            <person name="Kitano H."/>
            <person name="Kollias G."/>
            <person name="Krishnan S.P."/>
            <person name="Kruger A."/>
            <person name="Kummerfeld S.K."/>
            <person name="Kurochkin I.V."/>
            <person name="Lareau L.F."/>
            <person name="Lazarevic D."/>
            <person name="Lipovich L."/>
            <person name="Liu J."/>
            <person name="Liuni S."/>
            <person name="McWilliam S."/>
            <person name="Madan Babu M."/>
            <person name="Madera M."/>
            <person name="Marchionni L."/>
            <person name="Matsuda H."/>
            <person name="Matsuzawa S."/>
            <person name="Miki H."/>
            <person name="Mignone F."/>
            <person name="Miyake S."/>
            <person name="Morris K."/>
            <person name="Mottagui-Tabar S."/>
            <person name="Mulder N."/>
            <person name="Nakano N."/>
            <person name="Nakauchi H."/>
            <person name="Ng P."/>
            <person name="Nilsson R."/>
            <person name="Nishiguchi S."/>
            <person name="Nishikawa S."/>
            <person name="Nori F."/>
            <person name="Ohara O."/>
            <person name="Okazaki Y."/>
            <person name="Orlando V."/>
            <person name="Pang K.C."/>
            <person name="Pavan W.J."/>
            <person name="Pavesi G."/>
            <person name="Pesole G."/>
            <person name="Petrovsky N."/>
            <person name="Piazza S."/>
            <person name="Reed J."/>
            <person name="Reid J.F."/>
            <person name="Ring B.Z."/>
            <person name="Ringwald M."/>
            <person name="Rost B."/>
            <person name="Ruan Y."/>
            <person name="Salzberg S.L."/>
            <person name="Sandelin A."/>
            <person name="Schneider C."/>
            <person name="Schoenbach C."/>
            <person name="Sekiguchi K."/>
            <person name="Semple C.A."/>
            <person name="Seno S."/>
            <person name="Sessa L."/>
            <person name="Sheng Y."/>
            <person name="Shibata Y."/>
            <person name="Shimada H."/>
            <person name="Shimada K."/>
            <person name="Silva D."/>
            <person name="Sinclair B."/>
            <person name="Sperling S."/>
            <person name="Stupka E."/>
            <person name="Sugiura K."/>
            <person name="Sultana R."/>
            <person name="Takenaka Y."/>
            <person name="Taki K."/>
            <person name="Tammoja K."/>
            <person name="Tan S.L."/>
            <person name="Tang S."/>
            <person name="Taylor M.S."/>
            <person name="Tegner J."/>
            <person name="Teichmann S.A."/>
            <person name="Ueda H.R."/>
            <person name="van Nimwegen E."/>
            <person name="Verardo R."/>
            <person name="Wei C.L."/>
            <person name="Yagi K."/>
            <person name="Yamanishi H."/>
            <person name="Zabarovsky E."/>
            <person name="Zhu S."/>
            <person name="Zimmer A."/>
            <person name="Hide W."/>
            <person name="Bult C."/>
            <person name="Grimmond S.M."/>
            <person name="Teasdale R.D."/>
            <person name="Liu E.T."/>
            <person name="Brusic V."/>
            <person name="Quackenbush J."/>
            <person name="Wahlestedt C."/>
            <person name="Mattick J.S."/>
            <person name="Hume D.A."/>
            <person name="Kai C."/>
            <person name="Sasaki D."/>
            <person name="Tomaru Y."/>
            <person name="Fukuda S."/>
            <person name="Kanamori-Katayama M."/>
            <person name="Suzuki M."/>
            <person name="Aoki J."/>
            <person name="Arakawa T."/>
            <person name="Iida J."/>
            <person name="Imamura K."/>
            <person name="Itoh M."/>
            <person name="Kato T."/>
            <person name="Kawaji H."/>
            <person name="Kawagashira N."/>
            <person name="Kawashima T."/>
            <person name="Kojima M."/>
            <person name="Kondo S."/>
            <person name="Konno H."/>
            <person name="Nakano K."/>
            <person name="Ninomiya N."/>
            <person name="Nishio T."/>
            <person name="Okada M."/>
            <person name="Plessy C."/>
            <person name="Shibata K."/>
            <person name="Shiraki T."/>
            <person name="Suzuki S."/>
            <person name="Tagami M."/>
            <person name="Waki K."/>
            <person name="Watahiki A."/>
            <person name="Okamura-Oho Y."/>
            <person name="Suzuki H."/>
            <person name="Kawai J."/>
            <person name="Hayashizaki Y."/>
        </authorList>
    </citation>
    <scope>NUCLEOTIDE SEQUENCE [LARGE SCALE MRNA] (ISOFORM 1)</scope>
    <scope>NUCLEOTIDE SEQUENCE [LARGE SCALE MRNA] OF 1-688 (ISOFORM 3)</scope>
    <source>
        <strain>C57BL/6J</strain>
        <tissue>Testis</tissue>
    </source>
</reference>
<reference key="2">
    <citation type="journal article" date="2009" name="PLoS Biol.">
        <title>Lineage-specific biology revealed by a finished genome assembly of the mouse.</title>
        <authorList>
            <person name="Church D.M."/>
            <person name="Goodstadt L."/>
            <person name="Hillier L.W."/>
            <person name="Zody M.C."/>
            <person name="Goldstein S."/>
            <person name="She X."/>
            <person name="Bult C.J."/>
            <person name="Agarwala R."/>
            <person name="Cherry J.L."/>
            <person name="DiCuccio M."/>
            <person name="Hlavina W."/>
            <person name="Kapustin Y."/>
            <person name="Meric P."/>
            <person name="Maglott D."/>
            <person name="Birtle Z."/>
            <person name="Marques A.C."/>
            <person name="Graves T."/>
            <person name="Zhou S."/>
            <person name="Teague B."/>
            <person name="Potamousis K."/>
            <person name="Churas C."/>
            <person name="Place M."/>
            <person name="Herschleb J."/>
            <person name="Runnheim R."/>
            <person name="Forrest D."/>
            <person name="Amos-Landgraf J."/>
            <person name="Schwartz D.C."/>
            <person name="Cheng Z."/>
            <person name="Lindblad-Toh K."/>
            <person name="Eichler E.E."/>
            <person name="Ponting C.P."/>
        </authorList>
    </citation>
    <scope>NUCLEOTIDE SEQUENCE [LARGE SCALE GENOMIC DNA]</scope>
    <source>
        <strain>C57BL/6J</strain>
    </source>
</reference>
<reference key="3">
    <citation type="submission" date="2005-02" db="EMBL/GenBank/DDBJ databases">
        <title>Prediction of the coding sequences of mouse homologues of KIAA gene. The complete nucleotide sequences of mouse KIAA-homologous cDNAs identified by screening of terminal sequences of cDNA clones randomly sampled from size-fractionated libraries.</title>
        <authorList>
            <person name="Okazaki N."/>
            <person name="Kikuno R.F."/>
            <person name="Ohara R."/>
            <person name="Inamoto S."/>
            <person name="Nagase T."/>
            <person name="Ohara O."/>
            <person name="Koga H."/>
        </authorList>
    </citation>
    <scope>NUCLEOTIDE SEQUENCE [LARGE SCALE MRNA] OF 95-714 (ISOFORM 2)</scope>
    <source>
        <tissue>Fetal brain</tissue>
    </source>
</reference>
<reference key="4">
    <citation type="journal article" date="2010" name="Cell">
        <title>A tissue-specific atlas of mouse protein phosphorylation and expression.</title>
        <authorList>
            <person name="Huttlin E.L."/>
            <person name="Jedrychowski M.P."/>
            <person name="Elias J.E."/>
            <person name="Goswami T."/>
            <person name="Rad R."/>
            <person name="Beausoleil S.A."/>
            <person name="Villen J."/>
            <person name="Haas W."/>
            <person name="Sowa M.E."/>
            <person name="Gygi S.P."/>
        </authorList>
    </citation>
    <scope>IDENTIFICATION BY MASS SPECTROMETRY [LARGE SCALE ANALYSIS]</scope>
    <source>
        <tissue>Testis</tissue>
    </source>
</reference>
<proteinExistence type="evidence at protein level"/>
<evidence type="ECO:0000256" key="1">
    <source>
        <dbReference type="SAM" id="MobiDB-lite"/>
    </source>
</evidence>
<evidence type="ECO:0000303" key="2">
    <source>
    </source>
</evidence>
<evidence type="ECO:0000303" key="3">
    <source ref="3"/>
</evidence>
<evidence type="ECO:0000305" key="4"/>
<organism>
    <name type="scientific">Mus musculus</name>
    <name type="common">Mouse</name>
    <dbReference type="NCBI Taxonomy" id="10090"/>
    <lineage>
        <taxon>Eukaryota</taxon>
        <taxon>Metazoa</taxon>
        <taxon>Chordata</taxon>
        <taxon>Craniata</taxon>
        <taxon>Vertebrata</taxon>
        <taxon>Euteleostomi</taxon>
        <taxon>Mammalia</taxon>
        <taxon>Eutheria</taxon>
        <taxon>Euarchontoglires</taxon>
        <taxon>Glires</taxon>
        <taxon>Rodentia</taxon>
        <taxon>Myomorpha</taxon>
        <taxon>Muroidea</taxon>
        <taxon>Muridae</taxon>
        <taxon>Murinae</taxon>
        <taxon>Mus</taxon>
        <taxon>Mus</taxon>
    </lineage>
</organism>
<protein>
    <recommendedName>
        <fullName>Zinc finger matrin-type protein 1</fullName>
    </recommendedName>
</protein>
<gene>
    <name type="primary">Zmat1</name>
    <name type="synonym">Kiaa1789</name>
</gene>
<feature type="chain" id="PRO_0000311349" description="Zinc finger matrin-type protein 1">
    <location>
        <begin position="1"/>
        <end position="714"/>
    </location>
</feature>
<feature type="zinc finger region" description="Matrin-type 1">
    <location>
        <begin position="89"/>
        <end position="119"/>
    </location>
</feature>
<feature type="zinc finger region" description="Matrin-type 2">
    <location>
        <begin position="230"/>
        <end position="254"/>
    </location>
</feature>
<feature type="region of interest" description="Disordered" evidence="1">
    <location>
        <begin position="172"/>
        <end position="214"/>
    </location>
</feature>
<feature type="region of interest" description="Disordered" evidence="1">
    <location>
        <begin position="417"/>
        <end position="469"/>
    </location>
</feature>
<feature type="region of interest" description="Disordered" evidence="1">
    <location>
        <begin position="571"/>
        <end position="714"/>
    </location>
</feature>
<feature type="compositionally biased region" description="Basic and acidic residues" evidence="1">
    <location>
        <begin position="417"/>
        <end position="434"/>
    </location>
</feature>
<feature type="compositionally biased region" description="Polar residues" evidence="1">
    <location>
        <begin position="437"/>
        <end position="446"/>
    </location>
</feature>
<feature type="compositionally biased region" description="Polar residues" evidence="1">
    <location>
        <begin position="575"/>
        <end position="588"/>
    </location>
</feature>
<feature type="compositionally biased region" description="Basic residues" evidence="1">
    <location>
        <begin position="609"/>
        <end position="619"/>
    </location>
</feature>
<feature type="compositionally biased region" description="Basic and acidic residues" evidence="1">
    <location>
        <begin position="620"/>
        <end position="632"/>
    </location>
</feature>
<feature type="compositionally biased region" description="Basic and acidic residues" evidence="1">
    <location>
        <begin position="640"/>
        <end position="662"/>
    </location>
</feature>
<feature type="compositionally biased region" description="Basic residues" evidence="1">
    <location>
        <begin position="669"/>
        <end position="678"/>
    </location>
</feature>
<feature type="splice variant" id="VSP_029534" description="In isoform 3." evidence="2">
    <location>
        <begin position="1"/>
        <end position="226"/>
    </location>
</feature>
<feature type="splice variant" id="VSP_029535" description="In isoform 2 and isoform 3." evidence="2 3">
    <location>
        <begin position="258"/>
        <end position="272"/>
    </location>
</feature>
<feature type="sequence conflict" description="In Ref. 2; BAD90465." evidence="4" ref="2">
    <original>C</original>
    <variation>R</variation>
    <location>
        <position position="145"/>
    </location>
</feature>
<feature type="sequence conflict" description="In Ref. 1; BAE21583." evidence="4" ref="1">
    <original>H</original>
    <variation>R</variation>
    <location>
        <position position="178"/>
    </location>
</feature>
<feature type="sequence conflict" description="In Ref. 1; BAC32933." evidence="4" ref="1">
    <original>E</original>
    <variation>G</variation>
    <location>
        <position position="341"/>
    </location>
</feature>
<accession>Q3V0C1</accession>
<accession>A2AFB3</accession>
<accession>Q5DTV1</accession>
<accession>Q8BI78</accession>
<dbReference type="EMBL" id="AK046974">
    <property type="protein sequence ID" value="BAC32933.1"/>
    <property type="status" value="ALT_FRAME"/>
    <property type="molecule type" value="mRNA"/>
</dbReference>
<dbReference type="EMBL" id="AK133258">
    <property type="protein sequence ID" value="BAE21583.1"/>
    <property type="molecule type" value="mRNA"/>
</dbReference>
<dbReference type="EMBL" id="AL672063">
    <property type="protein sequence ID" value="CAM26540.1"/>
    <property type="status" value="ALT_SEQ"/>
    <property type="molecule type" value="Genomic_DNA"/>
</dbReference>
<dbReference type="EMBL" id="AK220419">
    <property type="protein sequence ID" value="BAD90465.1"/>
    <property type="molecule type" value="mRNA"/>
</dbReference>
<dbReference type="FunCoup" id="Q3V0C1">
    <property type="interactions" value="14"/>
</dbReference>
<dbReference type="STRING" id="10090.ENSMUSP00000066815"/>
<dbReference type="GlyGen" id="Q3V0C1">
    <property type="glycosylation" value="1 site, 1 O-linked glycan (1 site)"/>
</dbReference>
<dbReference type="iPTMnet" id="Q3V0C1"/>
<dbReference type="PhosphoSitePlus" id="Q3V0C1"/>
<dbReference type="PaxDb" id="10090-ENSMUSP00000066815"/>
<dbReference type="ProteomicsDB" id="302060">
    <molecule id="Q3V0C1-1"/>
</dbReference>
<dbReference type="ProteomicsDB" id="302061">
    <molecule id="Q3V0C1-2"/>
</dbReference>
<dbReference type="ProteomicsDB" id="302062">
    <molecule id="Q3V0C1-3"/>
</dbReference>
<dbReference type="UCSC" id="uc009ugw.1">
    <molecule id="Q3V0C1-3"/>
    <property type="organism name" value="mouse"/>
</dbReference>
<dbReference type="UCSC" id="uc012hon.1">
    <molecule id="Q3V0C1-1"/>
    <property type="organism name" value="mouse"/>
</dbReference>
<dbReference type="AGR" id="MGI:2442284"/>
<dbReference type="MGI" id="MGI:2442284">
    <property type="gene designation" value="Zmat1"/>
</dbReference>
<dbReference type="eggNOG" id="ENOG502S5D7">
    <property type="taxonomic scope" value="Eukaryota"/>
</dbReference>
<dbReference type="InParanoid" id="Q3V0C1"/>
<dbReference type="PhylomeDB" id="Q3V0C1"/>
<dbReference type="PRO" id="PR:Q3V0C1"/>
<dbReference type="Proteomes" id="UP000000589">
    <property type="component" value="Unplaced"/>
</dbReference>
<dbReference type="RNAct" id="Q3V0C1">
    <property type="molecule type" value="protein"/>
</dbReference>
<dbReference type="GO" id="GO:0005634">
    <property type="term" value="C:nucleus"/>
    <property type="evidence" value="ECO:0007669"/>
    <property type="project" value="UniProtKB-SubCell"/>
</dbReference>
<dbReference type="GO" id="GO:0003677">
    <property type="term" value="F:DNA binding"/>
    <property type="evidence" value="ECO:0007669"/>
    <property type="project" value="UniProtKB-KW"/>
</dbReference>
<dbReference type="GO" id="GO:0008270">
    <property type="term" value="F:zinc ion binding"/>
    <property type="evidence" value="ECO:0007669"/>
    <property type="project" value="UniProtKB-KW"/>
</dbReference>
<dbReference type="Gene3D" id="3.30.160.60">
    <property type="entry name" value="Classic Zinc Finger"/>
    <property type="match status" value="3"/>
</dbReference>
<dbReference type="InterPro" id="IPR003604">
    <property type="entry name" value="Matrin/U1-like-C_Znf_C2H2"/>
</dbReference>
<dbReference type="InterPro" id="IPR036236">
    <property type="entry name" value="Znf_C2H2_sf"/>
</dbReference>
<dbReference type="InterPro" id="IPR013087">
    <property type="entry name" value="Znf_C2H2_type"/>
</dbReference>
<dbReference type="PANTHER" id="PTHR46742">
    <property type="entry name" value="LYSINE-RICH COILED-COIL PROTEIN 1"/>
    <property type="match status" value="1"/>
</dbReference>
<dbReference type="PANTHER" id="PTHR46742:SF2">
    <property type="entry name" value="ZINC FINGER MATRIN-TYPE PROTEIN 1"/>
    <property type="match status" value="1"/>
</dbReference>
<dbReference type="Pfam" id="PF12874">
    <property type="entry name" value="zf-met"/>
    <property type="match status" value="1"/>
</dbReference>
<dbReference type="SMART" id="SM00355">
    <property type="entry name" value="ZnF_C2H2"/>
    <property type="match status" value="2"/>
</dbReference>
<dbReference type="SMART" id="SM00451">
    <property type="entry name" value="ZnF_U1"/>
    <property type="match status" value="2"/>
</dbReference>
<dbReference type="SUPFAM" id="SSF57667">
    <property type="entry name" value="beta-beta-alpha zinc fingers"/>
    <property type="match status" value="2"/>
</dbReference>
<keyword id="KW-0025">Alternative splicing</keyword>
<keyword id="KW-0238">DNA-binding</keyword>
<keyword id="KW-0479">Metal-binding</keyword>
<keyword id="KW-0539">Nucleus</keyword>
<keyword id="KW-1185">Reference proteome</keyword>
<keyword id="KW-0677">Repeat</keyword>
<keyword id="KW-0862">Zinc</keyword>
<keyword id="KW-0863">Zinc-finger</keyword>
<name>ZMAT1_MOUSE</name>
<comment type="subcellular location">
    <subcellularLocation>
        <location evidence="4">Nucleus</location>
    </subcellularLocation>
</comment>
<comment type="alternative products">
    <event type="alternative splicing"/>
    <isoform>
        <id>Q3V0C1-1</id>
        <name>1</name>
        <sequence type="displayed"/>
    </isoform>
    <isoform>
        <id>Q3V0C1-2</id>
        <name>2</name>
        <sequence type="described" ref="VSP_029535"/>
    </isoform>
    <isoform>
        <id>Q3V0C1-3</id>
        <name>3</name>
        <sequence type="described" ref="VSP_029534 VSP_029535"/>
    </isoform>
</comment>
<comment type="sequence caution" evidence="4">
    <conflict type="frameshift">
        <sequence resource="EMBL-CDS" id="BAC32933"/>
    </conflict>
</comment>
<comment type="sequence caution" evidence="4">
    <conflict type="erroneous gene model prediction">
        <sequence resource="EMBL-CDS" id="CAM26540"/>
    </conflict>
</comment>
<sequence>MHQQAATSSRCQGWSPRYQGWSPRFQGWSPRFHGWNPRFRGWNPHCRGWSPCFQGWSPRCQTFPPKINRISSNYPTCDGQEQPAYFTDNFCKPCGVVLQHESERISHFESEIHAQNVKFFFQMHGEQSEVPGRKVNMHAGNSQVCSSGEVNRNNFTDLHNMSFDSLAAAPSHYVGKSHSPTQNQSLEEHDQVSPSTCSPKMDEPNTTPAPPPFLKSVIVKPPPAYRMRTYVCHICSITFTSLHMFRSHMQGTEHQIKRAQHLWTHWQCTQLLESHVINQVKNSKKMQESCQAECGDDIKMKKSRELEPKGHFREMEDNYMEAQAHEYREMVDSRPRHKMLEQTLPLENFWAHPGPYNDSRALEEQLPHNLPAESKTYDSFQDELEDYIKGQKARGLDPNTSFRRMSESYRYRDQRYRERVDSEHRQRPCEERFSFEAPQTYQQEYSASPVEGQSPHWLPSHSKRRNDDFQNEFDDYNKVQESRESEPKTSFRRMDSSFETHNYEEMVDRRSSHTMFEEGLPCETFQTYTDPYSSAQAVENTLPHCLPAYENQPSLDAESHYQLTTEEFSEMPASLSLSQQEDNPSSYNVDYDIYKHLPSNDNASAHETSHRRRRQKRKRHLEEGKERPEKEQSKHKRKRSYQDKDLDKDKLIKQSKREEDKAGVSSEKTKHRRKKRKHETSSEKEERKHKKEKKKSVEERTEEEILWDESILGF</sequence>